<proteinExistence type="inferred from homology"/>
<dbReference type="EMBL" id="EF127906">
    <property type="protein sequence ID" value="ABN09918.1"/>
    <property type="molecule type" value="Genomic_DNA"/>
</dbReference>
<dbReference type="EMBL" id="EF127906">
    <property type="protein sequence ID" value="ABN09919.1"/>
    <property type="molecule type" value="Genomic_DNA"/>
</dbReference>
<dbReference type="KEGG" id="vg:5076882"/>
<dbReference type="KEGG" id="vg:5076883"/>
<dbReference type="Proteomes" id="UP000107189">
    <property type="component" value="Genome"/>
</dbReference>
<dbReference type="GO" id="GO:0043657">
    <property type="term" value="C:host cell"/>
    <property type="evidence" value="ECO:0007669"/>
    <property type="project" value="GOC"/>
</dbReference>
<dbReference type="GO" id="GO:0044167">
    <property type="term" value="C:host cell endoplasmic reticulum membrane"/>
    <property type="evidence" value="ECO:0007669"/>
    <property type="project" value="UniProtKB-SubCell"/>
</dbReference>
<dbReference type="GO" id="GO:0042025">
    <property type="term" value="C:host cell nucleus"/>
    <property type="evidence" value="ECO:0007669"/>
    <property type="project" value="UniProtKB-SubCell"/>
</dbReference>
<dbReference type="GO" id="GO:0016020">
    <property type="term" value="C:membrane"/>
    <property type="evidence" value="ECO:0007669"/>
    <property type="project" value="UniProtKB-KW"/>
</dbReference>
<dbReference type="GO" id="GO:0019028">
    <property type="term" value="C:viral capsid"/>
    <property type="evidence" value="ECO:0007669"/>
    <property type="project" value="UniProtKB-KW"/>
</dbReference>
<dbReference type="GO" id="GO:0046718">
    <property type="term" value="P:symbiont entry into host cell"/>
    <property type="evidence" value="ECO:0007669"/>
    <property type="project" value="UniProtKB-KW"/>
</dbReference>
<dbReference type="GO" id="GO:0075732">
    <property type="term" value="P:viral penetration into host nucleus"/>
    <property type="evidence" value="ECO:0007669"/>
    <property type="project" value="UniProtKB-KW"/>
</dbReference>
<protein>
    <recommendedName>
        <fullName>Minor capsid protein VP2</fullName>
    </recommendedName>
    <alternativeName>
        <fullName>Minor structural protein VP2</fullName>
    </alternativeName>
</protein>
<comment type="function">
    <molecule>Isoform VP2</molecule>
    <text evidence="1">Structural protein that resides within the core of the capsid surrounded by 72 VP1 pentamers. Participates in host cell receptor binding together with VP1. Following virus endocytosis and trafficking to the endoplasmic reticulum, VP2 and VP3 form oligomers and integrate into the endoplasmic reticulum membrane. Heterooligomer VP2-VP3 may create a viroporin for transporting the viral genome across the endoplasmic reticulum membrane to the cytoplasm. Nuclear entry of the viral DNA involves the selective exposure and importin recognition of VP2 or VP3 nuclear localization signal (shared C-terminus). Plays a role in virion assembly within the nucleus in particular through a DNA-binding domain located in the C-terminal region. A N-terminal myristoylation suggests a scaffold function for virion assembly.</text>
</comment>
<comment type="function">
    <molecule>Isoform VP3</molecule>
    <text evidence="1">Structural protein that resides within the core of the capsid surrounded by 72 VP1 pentamers. Following virus endocytosis and trafficking to the endoplasmic reticulum, VP2 and VP3 form oligomers and integrate into the endoplasmic reticulum membrane. Heterooligomer VP2-VP3 may create a viroporin for transporting the viral genome across the endoplasmic reticulum membrane to the cytoplasm. Nuclear entry of the viral DNA involves the selective exposure and importin recognition of VP2 or Vp3 nuclear localization signal (shared C-terminus). Isoform VP3 plays a role in virion assembly within the nucleus.</text>
</comment>
<comment type="subunit">
    <molecule>Isoform VP2</molecule>
    <text evidence="1">Forms homooligomers, and heterooligomers with VP3 in the endoplasmic reticulum membrane. Interacts (via D1 domain) with VP1.</text>
</comment>
<comment type="subunit">
    <molecule>Isoform VP3</molecule>
    <text>Interacts (via D1 domain) with VP1.</text>
</comment>
<comment type="subcellular location">
    <molecule>Isoform VP2</molecule>
    <subcellularLocation>
        <location evidence="3">Virion</location>
    </subcellularLocation>
    <subcellularLocation>
        <location evidence="1">Host nucleus</location>
    </subcellularLocation>
    <subcellularLocation>
        <location evidence="1">Host endoplasmic reticulum</location>
    </subcellularLocation>
    <subcellularLocation>
        <location evidence="1">Host endoplasmic reticulum membrane</location>
    </subcellularLocation>
    <text evidence="1">Following host cell entry, the virion enters into the endoplasmic reticulum through a calveolar-dependent pathway. Then, isoform VP2 integrates into the endoplasmic reticulum membrane and participates in the translocation of viral DNA to the nucleus. Shortly after synthesis, a nuclear localization signal directs isoform VP2 to the cell nucleus where virion assembly occurs.</text>
</comment>
<comment type="subcellular location">
    <molecule>Isoform VP3</molecule>
    <subcellularLocation>
        <location evidence="3">Virion</location>
    </subcellularLocation>
    <subcellularLocation>
        <location evidence="1">Host nucleus</location>
    </subcellularLocation>
    <subcellularLocation>
        <location evidence="1">Host endoplasmic reticulum</location>
    </subcellularLocation>
    <subcellularLocation>
        <location evidence="1">Host endoplasmic reticulum membrane</location>
    </subcellularLocation>
    <text evidence="1">Following host cell entry, the virion enters into the endoplasmic reticulum through a calveolar-dependent pathway. Then, isoform VP3 integrates into the endoplasmic reticulum membrane and participates in the translocation of viral DNA to the nucleus. Shortly after synthesis, a nuclear localization signal directs isoform VP3 to the cell nucleus where virion assembly occurs.</text>
</comment>
<comment type="alternative products">
    <event type="alternative splicing"/>
    <event type="alternative initiation"/>
    <isoform>
        <id>P0DOJ2-1</id>
        <id>A3R4N1-1</id>
        <name>VP2</name>
        <name>Minor capsid protein VP2</name>
        <sequence type="displayed"/>
    </isoform>
    <isoform>
        <id>P0DOJ2-2</id>
        <id>A3R4N1-2</id>
        <name>VP3</name>
        <name>Minor capsid protein VP3</name>
        <sequence type="described" ref="VSP_059272"/>
    </isoform>
    <isoform>
        <id>P0DOI3-1</id>
        <id>A3R4N3-1</id>
        <name>VP1</name>
        <sequence type="external"/>
    </isoform>
</comment>
<comment type="miscellaneous">
    <molecule>Isoform VP2</molecule>
    <text>Produced by alternative splicing of the late mRNA.</text>
</comment>
<comment type="miscellaneous">
    <molecule>Isoform VP3</molecule>
    <text evidence="3">Produced by alternative initiation at Met-144 of isoform VP2.</text>
</comment>
<comment type="similarity">
    <text evidence="3">Belongs to the polyomaviruses capsid protein VP2 family.</text>
</comment>
<reference key="1">
    <citation type="journal article" date="2007" name="J. Virol.">
        <title>Identification of a third human polyomavirus.</title>
        <authorList>
            <person name="Allander T."/>
            <person name="Andreasson K."/>
            <person name="Gupta S."/>
            <person name="Bjerkner A."/>
            <person name="Bogdanovic G."/>
            <person name="Persson M.A."/>
            <person name="Dalianis T."/>
            <person name="Ramqvist T."/>
            <person name="Andersson B."/>
        </authorList>
    </citation>
    <scope>NUCLEOTIDE SEQUENCE [GENOMIC DNA]</scope>
</reference>
<reference key="2">
    <citation type="journal article" date="2009" name="Virology">
        <title>The Polyomaviridae: Contributions of virus structure to our understanding of virus receptors and infectious entry.</title>
        <authorList>
            <person name="Neu U."/>
            <person name="Stehle T."/>
            <person name="Atwood W.J."/>
        </authorList>
    </citation>
    <scope>REVIEW</scope>
</reference>
<feature type="initiator methionine" description="Removed; by host" evidence="1">
    <location>
        <position position="1"/>
    </location>
</feature>
<feature type="chain" id="PRO_0000442712" description="Minor capsid protein VP2">
    <location>
        <begin position="2"/>
        <end position="400"/>
    </location>
</feature>
<feature type="region of interest" description="Disordered" evidence="2">
    <location>
        <begin position="99"/>
        <end position="118"/>
    </location>
</feature>
<feature type="region of interest" description="D1" evidence="1">
    <location>
        <begin position="307"/>
        <end position="342"/>
    </location>
</feature>
<feature type="region of interest" description="DNA-binding" evidence="1">
    <location>
        <begin position="347"/>
        <end position="394"/>
    </location>
</feature>
<feature type="region of interest" description="Disordered" evidence="2">
    <location>
        <begin position="348"/>
        <end position="400"/>
    </location>
</feature>
<feature type="short sequence motif" description="Nuclear localization signal" evidence="1">
    <location>
        <begin position="359"/>
        <end position="369"/>
    </location>
</feature>
<feature type="compositionally biased region" description="Low complexity" evidence="2">
    <location>
        <begin position="370"/>
        <end position="379"/>
    </location>
</feature>
<feature type="compositionally biased region" description="Basic residues" evidence="2">
    <location>
        <begin position="380"/>
        <end position="400"/>
    </location>
</feature>
<feature type="lipid moiety-binding region" description="N-myristoyl glycine; by host" evidence="1">
    <location>
        <position position="2"/>
    </location>
</feature>
<feature type="splice variant" id="VSP_059272" description="In isoform VP3." evidence="3">
    <location>
        <begin position="1"/>
        <end position="143"/>
    </location>
</feature>
<keyword id="KW-0024">Alternative initiation</keyword>
<keyword id="KW-0025">Alternative splicing</keyword>
<keyword id="KW-0167">Capsid protein</keyword>
<keyword id="KW-1038">Host endoplasmic reticulum</keyword>
<keyword id="KW-1043">Host membrane</keyword>
<keyword id="KW-1048">Host nucleus</keyword>
<keyword id="KW-0426">Late protein</keyword>
<keyword id="KW-0449">Lipoprotein</keyword>
<keyword id="KW-0472">Membrane</keyword>
<keyword id="KW-0519">Myristate</keyword>
<keyword id="KW-1163">Viral penetration into host nucleus</keyword>
<keyword id="KW-0946">Virion</keyword>
<keyword id="KW-1160">Virus entry into host cell</keyword>
<accession>P0DOJ2</accession>
<accession>A3R4M6</accession>
<accession>A3R4M7</accession>
<accession>A3R4N1</accession>
<accession>A3R4N2</accession>
<accession>A3R4N6</accession>
<accession>A3R4N7</accession>
<sequence>MGIFLAVPEIIAASIAGGAEALSIAGSGAAIATGEGLAALGGITEGAALLGETIPISEAATTVLTKVPELVQATQAVTAAVQGGAGLVGGIYTALASDHPGDLPPNTPTGSASGLHPTSGYNPQGAGLNLQSVHKPIHAPYSGMALVPIPEYQLETGIPGIPDWLFNLVASYLPELPSLQDVFNRIAFGIWSSYYNAGSTVVNRVLSDEIQRLLRDLEYGFRATLASIGESDPVNAIATQVRSLATTARERELLQITAGQPLDLSRPTSALSAAAGALTEAAYNFIYDASSLPKDGFNALSEGVHRLGQWISFSGPTGGTPHYATPDWILYVLEQLNADTYKIPTQAVKRKQDELHPVSPTKKANKAKKSSSPGTNSGNRSKKRRGRSTSRSTTVRRNRI</sequence>
<name>VP2_POVK6</name>
<organism>
    <name type="scientific">KI polyomavirus (isolate Stockholm 60)</name>
    <name type="common">KIPyV</name>
    <dbReference type="NCBI Taxonomy" id="423446"/>
    <lineage>
        <taxon>Viruses</taxon>
        <taxon>Monodnaviria</taxon>
        <taxon>Shotokuvirae</taxon>
        <taxon>Cossaviricota</taxon>
        <taxon>Papovaviricetes</taxon>
        <taxon>Sepolyvirales</taxon>
        <taxon>Polyomaviridae</taxon>
        <taxon>Betapolyomavirus</taxon>
        <taxon>Betapolyomavirus tertihominis</taxon>
    </lineage>
</organism>
<organismHost>
    <name type="scientific">Homo sapiens</name>
    <name type="common">Human</name>
    <dbReference type="NCBI Taxonomy" id="9606"/>
</organismHost>
<evidence type="ECO:0000250" key="1">
    <source>
        <dbReference type="UniProtKB" id="P03093"/>
    </source>
</evidence>
<evidence type="ECO:0000256" key="2">
    <source>
        <dbReference type="SAM" id="MobiDB-lite"/>
    </source>
</evidence>
<evidence type="ECO:0000305" key="3"/>